<organism>
    <name type="scientific">Listeria monocytogenes serotype 4b (strain F2365)</name>
    <dbReference type="NCBI Taxonomy" id="265669"/>
    <lineage>
        <taxon>Bacteria</taxon>
        <taxon>Bacillati</taxon>
        <taxon>Bacillota</taxon>
        <taxon>Bacilli</taxon>
        <taxon>Bacillales</taxon>
        <taxon>Listeriaceae</taxon>
        <taxon>Listeria</taxon>
    </lineage>
</organism>
<evidence type="ECO:0000255" key="1">
    <source>
        <dbReference type="HAMAP-Rule" id="MF_00016"/>
    </source>
</evidence>
<feature type="chain" id="PRO_0000165552" description="Holliday junction branch migration complex subunit RuvB">
    <location>
        <begin position="1"/>
        <end position="335"/>
    </location>
</feature>
<feature type="region of interest" description="Large ATPase domain (RuvB-L)" evidence="1">
    <location>
        <begin position="1"/>
        <end position="183"/>
    </location>
</feature>
<feature type="region of interest" description="Small ATPAse domain (RuvB-S)" evidence="1">
    <location>
        <begin position="184"/>
        <end position="254"/>
    </location>
</feature>
<feature type="region of interest" description="Head domain (RuvB-H)" evidence="1">
    <location>
        <begin position="257"/>
        <end position="335"/>
    </location>
</feature>
<feature type="binding site" evidence="1">
    <location>
        <position position="22"/>
    </location>
    <ligand>
        <name>ATP</name>
        <dbReference type="ChEBI" id="CHEBI:30616"/>
    </ligand>
</feature>
<feature type="binding site" evidence="1">
    <location>
        <position position="23"/>
    </location>
    <ligand>
        <name>ATP</name>
        <dbReference type="ChEBI" id="CHEBI:30616"/>
    </ligand>
</feature>
<feature type="binding site" evidence="1">
    <location>
        <position position="64"/>
    </location>
    <ligand>
        <name>ATP</name>
        <dbReference type="ChEBI" id="CHEBI:30616"/>
    </ligand>
</feature>
<feature type="binding site" evidence="1">
    <location>
        <position position="67"/>
    </location>
    <ligand>
        <name>ATP</name>
        <dbReference type="ChEBI" id="CHEBI:30616"/>
    </ligand>
</feature>
<feature type="binding site" evidence="1">
    <location>
        <position position="68"/>
    </location>
    <ligand>
        <name>ATP</name>
        <dbReference type="ChEBI" id="CHEBI:30616"/>
    </ligand>
</feature>
<feature type="binding site" evidence="1">
    <location>
        <position position="68"/>
    </location>
    <ligand>
        <name>Mg(2+)</name>
        <dbReference type="ChEBI" id="CHEBI:18420"/>
    </ligand>
</feature>
<feature type="binding site" evidence="1">
    <location>
        <position position="69"/>
    </location>
    <ligand>
        <name>ATP</name>
        <dbReference type="ChEBI" id="CHEBI:30616"/>
    </ligand>
</feature>
<feature type="binding site" evidence="1">
    <location>
        <begin position="130"/>
        <end position="132"/>
    </location>
    <ligand>
        <name>ATP</name>
        <dbReference type="ChEBI" id="CHEBI:30616"/>
    </ligand>
</feature>
<feature type="binding site" evidence="1">
    <location>
        <position position="173"/>
    </location>
    <ligand>
        <name>ATP</name>
        <dbReference type="ChEBI" id="CHEBI:30616"/>
    </ligand>
</feature>
<feature type="binding site" evidence="1">
    <location>
        <position position="183"/>
    </location>
    <ligand>
        <name>ATP</name>
        <dbReference type="ChEBI" id="CHEBI:30616"/>
    </ligand>
</feature>
<feature type="binding site" evidence="1">
    <location>
        <position position="220"/>
    </location>
    <ligand>
        <name>ATP</name>
        <dbReference type="ChEBI" id="CHEBI:30616"/>
    </ligand>
</feature>
<feature type="binding site" evidence="1">
    <location>
        <position position="293"/>
    </location>
    <ligand>
        <name>DNA</name>
        <dbReference type="ChEBI" id="CHEBI:16991"/>
    </ligand>
</feature>
<feature type="binding site" evidence="1">
    <location>
        <position position="312"/>
    </location>
    <ligand>
        <name>DNA</name>
        <dbReference type="ChEBI" id="CHEBI:16991"/>
    </ligand>
</feature>
<feature type="binding site" evidence="1">
    <location>
        <position position="317"/>
    </location>
    <ligand>
        <name>DNA</name>
        <dbReference type="ChEBI" id="CHEBI:16991"/>
    </ligand>
</feature>
<dbReference type="EC" id="3.6.4.-" evidence="1"/>
<dbReference type="EMBL" id="AE017262">
    <property type="protein sequence ID" value="AAT04326.1"/>
    <property type="molecule type" value="Genomic_DNA"/>
</dbReference>
<dbReference type="RefSeq" id="WP_003727396.1">
    <property type="nucleotide sequence ID" value="NC_002973.6"/>
</dbReference>
<dbReference type="SMR" id="Q71ZD8"/>
<dbReference type="KEGG" id="lmf:LMOf2365_1551"/>
<dbReference type="HOGENOM" id="CLU_055599_1_0_9"/>
<dbReference type="GO" id="GO:0005737">
    <property type="term" value="C:cytoplasm"/>
    <property type="evidence" value="ECO:0007669"/>
    <property type="project" value="UniProtKB-SubCell"/>
</dbReference>
<dbReference type="GO" id="GO:0048476">
    <property type="term" value="C:Holliday junction resolvase complex"/>
    <property type="evidence" value="ECO:0007669"/>
    <property type="project" value="UniProtKB-UniRule"/>
</dbReference>
<dbReference type="GO" id="GO:0005524">
    <property type="term" value="F:ATP binding"/>
    <property type="evidence" value="ECO:0007669"/>
    <property type="project" value="UniProtKB-UniRule"/>
</dbReference>
<dbReference type="GO" id="GO:0016887">
    <property type="term" value="F:ATP hydrolysis activity"/>
    <property type="evidence" value="ECO:0007669"/>
    <property type="project" value="InterPro"/>
</dbReference>
<dbReference type="GO" id="GO:0000400">
    <property type="term" value="F:four-way junction DNA binding"/>
    <property type="evidence" value="ECO:0007669"/>
    <property type="project" value="UniProtKB-UniRule"/>
</dbReference>
<dbReference type="GO" id="GO:0009378">
    <property type="term" value="F:four-way junction helicase activity"/>
    <property type="evidence" value="ECO:0007669"/>
    <property type="project" value="InterPro"/>
</dbReference>
<dbReference type="GO" id="GO:0006310">
    <property type="term" value="P:DNA recombination"/>
    <property type="evidence" value="ECO:0007669"/>
    <property type="project" value="UniProtKB-UniRule"/>
</dbReference>
<dbReference type="GO" id="GO:0006281">
    <property type="term" value="P:DNA repair"/>
    <property type="evidence" value="ECO:0007669"/>
    <property type="project" value="UniProtKB-UniRule"/>
</dbReference>
<dbReference type="CDD" id="cd00009">
    <property type="entry name" value="AAA"/>
    <property type="match status" value="1"/>
</dbReference>
<dbReference type="Gene3D" id="1.10.8.60">
    <property type="match status" value="1"/>
</dbReference>
<dbReference type="Gene3D" id="3.40.50.300">
    <property type="entry name" value="P-loop containing nucleotide triphosphate hydrolases"/>
    <property type="match status" value="1"/>
</dbReference>
<dbReference type="Gene3D" id="1.10.10.10">
    <property type="entry name" value="Winged helix-like DNA-binding domain superfamily/Winged helix DNA-binding domain"/>
    <property type="match status" value="1"/>
</dbReference>
<dbReference type="HAMAP" id="MF_00016">
    <property type="entry name" value="DNA_HJ_migration_RuvB"/>
    <property type="match status" value="1"/>
</dbReference>
<dbReference type="InterPro" id="IPR003593">
    <property type="entry name" value="AAA+_ATPase"/>
</dbReference>
<dbReference type="InterPro" id="IPR041445">
    <property type="entry name" value="AAA_lid_4"/>
</dbReference>
<dbReference type="InterPro" id="IPR004605">
    <property type="entry name" value="DNA_helicase_Holl-junc_RuvB"/>
</dbReference>
<dbReference type="InterPro" id="IPR027417">
    <property type="entry name" value="P-loop_NTPase"/>
</dbReference>
<dbReference type="InterPro" id="IPR008824">
    <property type="entry name" value="RuvB-like_N"/>
</dbReference>
<dbReference type="InterPro" id="IPR008823">
    <property type="entry name" value="RuvB_C"/>
</dbReference>
<dbReference type="InterPro" id="IPR036388">
    <property type="entry name" value="WH-like_DNA-bd_sf"/>
</dbReference>
<dbReference type="InterPro" id="IPR036390">
    <property type="entry name" value="WH_DNA-bd_sf"/>
</dbReference>
<dbReference type="NCBIfam" id="NF000868">
    <property type="entry name" value="PRK00080.1"/>
    <property type="match status" value="1"/>
</dbReference>
<dbReference type="NCBIfam" id="TIGR00635">
    <property type="entry name" value="ruvB"/>
    <property type="match status" value="1"/>
</dbReference>
<dbReference type="PANTHER" id="PTHR42848">
    <property type="match status" value="1"/>
</dbReference>
<dbReference type="PANTHER" id="PTHR42848:SF1">
    <property type="entry name" value="HOLLIDAY JUNCTION BRANCH MIGRATION COMPLEX SUBUNIT RUVB"/>
    <property type="match status" value="1"/>
</dbReference>
<dbReference type="Pfam" id="PF17864">
    <property type="entry name" value="AAA_lid_4"/>
    <property type="match status" value="1"/>
</dbReference>
<dbReference type="Pfam" id="PF05491">
    <property type="entry name" value="RuvB_C"/>
    <property type="match status" value="1"/>
</dbReference>
<dbReference type="Pfam" id="PF05496">
    <property type="entry name" value="RuvB_N"/>
    <property type="match status" value="1"/>
</dbReference>
<dbReference type="SMART" id="SM00382">
    <property type="entry name" value="AAA"/>
    <property type="match status" value="1"/>
</dbReference>
<dbReference type="SUPFAM" id="SSF52540">
    <property type="entry name" value="P-loop containing nucleoside triphosphate hydrolases"/>
    <property type="match status" value="1"/>
</dbReference>
<dbReference type="SUPFAM" id="SSF46785">
    <property type="entry name" value="Winged helix' DNA-binding domain"/>
    <property type="match status" value="1"/>
</dbReference>
<sequence length="335" mass="37106">MDERIISSETVDAEEVSFETSLRPQNLSQYIGQDKVKNNLTVFIEAATLRNEALDHVLLYGPPGLGKTTLAMVIAAEMGSQIKTTSGPAIERPGDLATILTSLEPGDVLFIDEIHRLSRAIEEILYPAMEDYCLDIVIGTGPTARSVRLDLPPFTLIGATTRAGLLSAPLRDRFGVIDHLEFYTEEQLTEIVLRTSNILDTKIDDLGAREIARRSRGTPRIANRLLKRVRDFAQVRGNGTVTEKLAKEALTLLQVDPRGLDTIDQKLLHTIIQSFRGGPVGLDTIAASIGEERETIEDMQEPYLLQIGFLQRTPRGRIATETAYNHLGISYEKEV</sequence>
<protein>
    <recommendedName>
        <fullName evidence="1">Holliday junction branch migration complex subunit RuvB</fullName>
        <ecNumber evidence="1">3.6.4.-</ecNumber>
    </recommendedName>
</protein>
<proteinExistence type="inferred from homology"/>
<reference key="1">
    <citation type="journal article" date="2004" name="Nucleic Acids Res.">
        <title>Whole genome comparisons of serotype 4b and 1/2a strains of the food-borne pathogen Listeria monocytogenes reveal new insights into the core genome components of this species.</title>
        <authorList>
            <person name="Nelson K.E."/>
            <person name="Fouts D.E."/>
            <person name="Mongodin E.F."/>
            <person name="Ravel J."/>
            <person name="DeBoy R.T."/>
            <person name="Kolonay J.F."/>
            <person name="Rasko D.A."/>
            <person name="Angiuoli S.V."/>
            <person name="Gill S.R."/>
            <person name="Paulsen I.T."/>
            <person name="Peterson J.D."/>
            <person name="White O."/>
            <person name="Nelson W.C."/>
            <person name="Nierman W.C."/>
            <person name="Beanan M.J."/>
            <person name="Brinkac L.M."/>
            <person name="Daugherty S.C."/>
            <person name="Dodson R.J."/>
            <person name="Durkin A.S."/>
            <person name="Madupu R."/>
            <person name="Haft D.H."/>
            <person name="Selengut J."/>
            <person name="Van Aken S.E."/>
            <person name="Khouri H.M."/>
            <person name="Fedorova N."/>
            <person name="Forberger H.A."/>
            <person name="Tran B."/>
            <person name="Kathariou S."/>
            <person name="Wonderling L.D."/>
            <person name="Uhlich G.A."/>
            <person name="Bayles D.O."/>
            <person name="Luchansky J.B."/>
            <person name="Fraser C.M."/>
        </authorList>
    </citation>
    <scope>NUCLEOTIDE SEQUENCE [LARGE SCALE GENOMIC DNA]</scope>
    <source>
        <strain>F2365</strain>
    </source>
</reference>
<comment type="function">
    <text evidence="1">The RuvA-RuvB-RuvC complex processes Holliday junction (HJ) DNA during genetic recombination and DNA repair, while the RuvA-RuvB complex plays an important role in the rescue of blocked DNA replication forks via replication fork reversal (RFR). RuvA specifically binds to HJ cruciform DNA, conferring on it an open structure. The RuvB hexamer acts as an ATP-dependent pump, pulling dsDNA into and through the RuvAB complex. RuvB forms 2 homohexamers on either side of HJ DNA bound by 1 or 2 RuvA tetramers; 4 subunits per hexamer contact DNA at a time. Coordinated motions by a converter formed by DNA-disengaged RuvB subunits stimulates ATP hydrolysis and nucleotide exchange. Immobilization of the converter enables RuvB to convert the ATP-contained energy into a lever motion, pulling 2 nucleotides of DNA out of the RuvA tetramer per ATP hydrolyzed, thus driving DNA branch migration. The RuvB motors rotate together with the DNA substrate, which together with the progressing nucleotide cycle form the mechanistic basis for DNA recombination by continuous HJ branch migration. Branch migration allows RuvC to scan DNA until it finds its consensus sequence, where it cleaves and resolves cruciform DNA.</text>
</comment>
<comment type="catalytic activity">
    <reaction evidence="1">
        <text>ATP + H2O = ADP + phosphate + H(+)</text>
        <dbReference type="Rhea" id="RHEA:13065"/>
        <dbReference type="ChEBI" id="CHEBI:15377"/>
        <dbReference type="ChEBI" id="CHEBI:15378"/>
        <dbReference type="ChEBI" id="CHEBI:30616"/>
        <dbReference type="ChEBI" id="CHEBI:43474"/>
        <dbReference type="ChEBI" id="CHEBI:456216"/>
    </reaction>
</comment>
<comment type="subunit">
    <text evidence="1">Homohexamer. Forms an RuvA(8)-RuvB(12)-Holliday junction (HJ) complex. HJ DNA is sandwiched between 2 RuvA tetramers; dsDNA enters through RuvA and exits via RuvB. An RuvB hexamer assembles on each DNA strand where it exits the tetramer. Each RuvB hexamer is contacted by two RuvA subunits (via domain III) on 2 adjacent RuvB subunits; this complex drives branch migration. In the full resolvosome a probable DNA-RuvA(4)-RuvB(12)-RuvC(2) complex forms which resolves the HJ.</text>
</comment>
<comment type="subcellular location">
    <subcellularLocation>
        <location evidence="1">Cytoplasm</location>
    </subcellularLocation>
</comment>
<comment type="domain">
    <text evidence="1">Has 3 domains, the large (RuvB-L) and small ATPase (RuvB-S) domains and the C-terminal head (RuvB-H) domain. The head domain binds DNA, while the ATPase domains jointly bind ATP, ADP or are empty depending on the state of the subunit in the translocation cycle. During a single DNA translocation step the structure of each domain remains the same, but their relative positions change.</text>
</comment>
<comment type="similarity">
    <text evidence="1">Belongs to the RuvB family.</text>
</comment>
<name>RUVB_LISMF</name>
<accession>Q71ZD8</accession>
<keyword id="KW-0067">ATP-binding</keyword>
<keyword id="KW-0963">Cytoplasm</keyword>
<keyword id="KW-0227">DNA damage</keyword>
<keyword id="KW-0233">DNA recombination</keyword>
<keyword id="KW-0234">DNA repair</keyword>
<keyword id="KW-0238">DNA-binding</keyword>
<keyword id="KW-0378">Hydrolase</keyword>
<keyword id="KW-0547">Nucleotide-binding</keyword>
<gene>
    <name evidence="1" type="primary">ruvB</name>
    <name type="ordered locus">LMOf2365_1551</name>
</gene>